<name>CYSZ_ECO5E</name>
<feature type="chain" id="PRO_1000125493" description="Sulfate transporter CysZ">
    <location>
        <begin position="1"/>
        <end position="253"/>
    </location>
</feature>
<feature type="transmembrane region" description="Helical" evidence="1">
    <location>
        <begin position="31"/>
        <end position="51"/>
    </location>
</feature>
<feature type="transmembrane region" description="Helical" evidence="1">
    <location>
        <begin position="75"/>
        <end position="95"/>
    </location>
</feature>
<feature type="transmembrane region" description="Helical" evidence="1">
    <location>
        <begin position="151"/>
        <end position="171"/>
    </location>
</feature>
<feature type="transmembrane region" description="Helical" evidence="1">
    <location>
        <begin position="222"/>
        <end position="242"/>
    </location>
</feature>
<keyword id="KW-0028">Amino-acid biosynthesis</keyword>
<keyword id="KW-0997">Cell inner membrane</keyword>
<keyword id="KW-1003">Cell membrane</keyword>
<keyword id="KW-0198">Cysteine biosynthesis</keyword>
<keyword id="KW-0472">Membrane</keyword>
<keyword id="KW-0764">Sulfate transport</keyword>
<keyword id="KW-0812">Transmembrane</keyword>
<keyword id="KW-1133">Transmembrane helix</keyword>
<keyword id="KW-0813">Transport</keyword>
<gene>
    <name evidence="1" type="primary">cysZ</name>
    <name type="ordered locus">ECH74115_3644</name>
</gene>
<protein>
    <recommendedName>
        <fullName evidence="1">Sulfate transporter CysZ</fullName>
    </recommendedName>
</protein>
<organism>
    <name type="scientific">Escherichia coli O157:H7 (strain EC4115 / EHEC)</name>
    <dbReference type="NCBI Taxonomy" id="444450"/>
    <lineage>
        <taxon>Bacteria</taxon>
        <taxon>Pseudomonadati</taxon>
        <taxon>Pseudomonadota</taxon>
        <taxon>Gammaproteobacteria</taxon>
        <taxon>Enterobacterales</taxon>
        <taxon>Enterobacteriaceae</taxon>
        <taxon>Escherichia</taxon>
    </lineage>
</organism>
<proteinExistence type="inferred from homology"/>
<dbReference type="EMBL" id="CP001164">
    <property type="protein sequence ID" value="ACI36500.1"/>
    <property type="molecule type" value="Genomic_DNA"/>
</dbReference>
<dbReference type="RefSeq" id="WP_000254839.1">
    <property type="nucleotide sequence ID" value="NC_011353.1"/>
</dbReference>
<dbReference type="SMR" id="B5YZW0"/>
<dbReference type="GeneID" id="93774718"/>
<dbReference type="KEGG" id="ecf:ECH74115_3644"/>
<dbReference type="HOGENOM" id="CLU_070331_1_0_6"/>
<dbReference type="GO" id="GO:0005886">
    <property type="term" value="C:plasma membrane"/>
    <property type="evidence" value="ECO:0007669"/>
    <property type="project" value="UniProtKB-SubCell"/>
</dbReference>
<dbReference type="GO" id="GO:0009675">
    <property type="term" value="F:high-affinity sulfate:proton symporter activity"/>
    <property type="evidence" value="ECO:0007669"/>
    <property type="project" value="TreeGrafter"/>
</dbReference>
<dbReference type="GO" id="GO:0019344">
    <property type="term" value="P:cysteine biosynthetic process"/>
    <property type="evidence" value="ECO:0007669"/>
    <property type="project" value="UniProtKB-UniRule"/>
</dbReference>
<dbReference type="GO" id="GO:0000103">
    <property type="term" value="P:sulfate assimilation"/>
    <property type="evidence" value="ECO:0007669"/>
    <property type="project" value="InterPro"/>
</dbReference>
<dbReference type="HAMAP" id="MF_00468">
    <property type="entry name" value="CysZ"/>
    <property type="match status" value="1"/>
</dbReference>
<dbReference type="InterPro" id="IPR050480">
    <property type="entry name" value="CysZ_sulfate_transptr"/>
</dbReference>
<dbReference type="InterPro" id="IPR022985">
    <property type="entry name" value="Sulfate_CysZ"/>
</dbReference>
<dbReference type="NCBIfam" id="NF003433">
    <property type="entry name" value="PRK04949.1"/>
    <property type="match status" value="1"/>
</dbReference>
<dbReference type="PANTHER" id="PTHR37468">
    <property type="entry name" value="SULFATE TRANSPORTER CYSZ"/>
    <property type="match status" value="1"/>
</dbReference>
<dbReference type="PANTHER" id="PTHR37468:SF1">
    <property type="entry name" value="SULFATE TRANSPORTER CYSZ"/>
    <property type="match status" value="1"/>
</dbReference>
<dbReference type="Pfam" id="PF07264">
    <property type="entry name" value="EI24"/>
    <property type="match status" value="1"/>
</dbReference>
<reference key="1">
    <citation type="journal article" date="2011" name="Proc. Natl. Acad. Sci. U.S.A.">
        <title>Genomic anatomy of Escherichia coli O157:H7 outbreaks.</title>
        <authorList>
            <person name="Eppinger M."/>
            <person name="Mammel M.K."/>
            <person name="Leclerc J.E."/>
            <person name="Ravel J."/>
            <person name="Cebula T.A."/>
        </authorList>
    </citation>
    <scope>NUCLEOTIDE SEQUENCE [LARGE SCALE GENOMIC DNA]</scope>
    <source>
        <strain>EC4115 / EHEC</strain>
    </source>
</reference>
<evidence type="ECO:0000255" key="1">
    <source>
        <dbReference type="HAMAP-Rule" id="MF_00468"/>
    </source>
</evidence>
<sequence>MVSSFTSAPRSGFYYFAQGWKLVSQPGIRRFVILPLLVNILLMGGAFWWLFTQLDVWIPTLMSYVPDWLQWLSYLLWPLAVISVLLVFGYFFSTIANWIAAPFNGLLAEQLEARLTGATPPDTGIFGIMKDVPRIMKREWQKFAWYLPRAIVLLILYFIPGIGQTVAPVLWFLFSAWMLAIQYCDYPFDNHKVPFKEMRTALRTRKITNMQFGALTSLFTMIPLLNLFIMPVAVCGATAMWVDCYRDKHAMWR</sequence>
<comment type="function">
    <text evidence="1">High affinity, high specificity proton-dependent sulfate transporter, which mediates sulfate uptake. Provides the sulfur source for the cysteine synthesis pathway.</text>
</comment>
<comment type="subcellular location">
    <subcellularLocation>
        <location evidence="1">Cell inner membrane</location>
        <topology evidence="1">Multi-pass membrane protein</topology>
    </subcellularLocation>
</comment>
<comment type="similarity">
    <text evidence="1">Belongs to the CysZ family.</text>
</comment>
<accession>B5YZW0</accession>